<evidence type="ECO:0000255" key="1">
    <source>
        <dbReference type="HAMAP-Rule" id="MF_00228"/>
    </source>
</evidence>
<proteinExistence type="inferred from homology"/>
<keyword id="KW-0067">ATP-binding</keyword>
<keyword id="KW-0418">Kinase</keyword>
<keyword id="KW-0460">Magnesium</keyword>
<keyword id="KW-0479">Metal-binding</keyword>
<keyword id="KW-0547">Nucleotide-binding</keyword>
<keyword id="KW-1185">Reference proteome</keyword>
<keyword id="KW-0784">Thiamine biosynthesis</keyword>
<keyword id="KW-0808">Transferase</keyword>
<name>THIM_ARCFU</name>
<comment type="function">
    <text evidence="1">Catalyzes the phosphorylation of the hydroxyl group of 4-methyl-5-beta-hydroxyethylthiazole (THZ).</text>
</comment>
<comment type="catalytic activity">
    <reaction evidence="1">
        <text>5-(2-hydroxyethyl)-4-methylthiazole + ATP = 4-methyl-5-(2-phosphooxyethyl)-thiazole + ADP + H(+)</text>
        <dbReference type="Rhea" id="RHEA:24212"/>
        <dbReference type="ChEBI" id="CHEBI:15378"/>
        <dbReference type="ChEBI" id="CHEBI:17957"/>
        <dbReference type="ChEBI" id="CHEBI:30616"/>
        <dbReference type="ChEBI" id="CHEBI:58296"/>
        <dbReference type="ChEBI" id="CHEBI:456216"/>
        <dbReference type="EC" id="2.7.1.50"/>
    </reaction>
</comment>
<comment type="cofactor">
    <cofactor evidence="1">
        <name>Mg(2+)</name>
        <dbReference type="ChEBI" id="CHEBI:18420"/>
    </cofactor>
</comment>
<comment type="pathway">
    <text evidence="1">Cofactor biosynthesis; thiamine diphosphate biosynthesis; 4-methyl-5-(2-phosphoethyl)-thiazole from 5-(2-hydroxyethyl)-4-methylthiazole: step 1/1.</text>
</comment>
<comment type="similarity">
    <text evidence="1">Belongs to the Thz kinase family.</text>
</comment>
<accession>O28204</accession>
<feature type="chain" id="PRO_0000156967" description="Hydroxyethylthiazole kinase">
    <location>
        <begin position="1"/>
        <end position="268"/>
    </location>
</feature>
<feature type="binding site" evidence="1">
    <location>
        <position position="49"/>
    </location>
    <ligand>
        <name>substrate</name>
    </ligand>
</feature>
<feature type="binding site" evidence="1">
    <location>
        <position position="124"/>
    </location>
    <ligand>
        <name>ATP</name>
        <dbReference type="ChEBI" id="CHEBI:30616"/>
    </ligand>
</feature>
<feature type="binding site" evidence="1">
    <location>
        <position position="168"/>
    </location>
    <ligand>
        <name>ATP</name>
        <dbReference type="ChEBI" id="CHEBI:30616"/>
    </ligand>
</feature>
<feature type="binding site" evidence="1">
    <location>
        <position position="195"/>
    </location>
    <ligand>
        <name>substrate</name>
    </ligand>
</feature>
<gene>
    <name evidence="1" type="primary">thiM</name>
    <name type="ordered locus">AF_2075</name>
</gene>
<sequence length="268" mass="28571">MHLQRLKEELERDIARIAEFKPVVHHITNYVAMNDSANITIAIGASPIMSFAHGEIDELVSIASSLLINIGTLDEYIIQAVMLAVKSAKSKGVPVLLDPVGSGATKLRTSTALSVAEEGVDVIKGNQGEILSLLRKEGVVRGVDSKVTAEAADVKEVARKFGLVVVATGKEDLISDGRSVYVMRNGTEMLGRITASGCMLGSVIASFMAVQKDFLLASLEGLACYNVAGELAAEKSSGTASFRSNLIDEISKITAEKVIERLNLERVV</sequence>
<dbReference type="EC" id="2.7.1.50" evidence="1"/>
<dbReference type="EMBL" id="AE000782">
    <property type="protein sequence ID" value="AAB89174.1"/>
    <property type="molecule type" value="Genomic_DNA"/>
</dbReference>
<dbReference type="PIR" id="B69509">
    <property type="entry name" value="B69509"/>
</dbReference>
<dbReference type="RefSeq" id="WP_010879567.1">
    <property type="nucleotide sequence ID" value="NC_000917.1"/>
</dbReference>
<dbReference type="SMR" id="O28204"/>
<dbReference type="STRING" id="224325.AF_2075"/>
<dbReference type="PaxDb" id="224325-AF_2075"/>
<dbReference type="EnsemblBacteria" id="AAB89174">
    <property type="protein sequence ID" value="AAB89174"/>
    <property type="gene ID" value="AF_2075"/>
</dbReference>
<dbReference type="GeneID" id="24795824"/>
<dbReference type="KEGG" id="afu:AF_2075"/>
<dbReference type="eggNOG" id="arCOG00019">
    <property type="taxonomic scope" value="Archaea"/>
</dbReference>
<dbReference type="HOGENOM" id="CLU_019943_0_1_2"/>
<dbReference type="OrthoDB" id="214286at2157"/>
<dbReference type="PhylomeDB" id="O28204"/>
<dbReference type="UniPathway" id="UPA00060">
    <property type="reaction ID" value="UER00139"/>
</dbReference>
<dbReference type="Proteomes" id="UP000002199">
    <property type="component" value="Chromosome"/>
</dbReference>
<dbReference type="GO" id="GO:0005524">
    <property type="term" value="F:ATP binding"/>
    <property type="evidence" value="ECO:0007669"/>
    <property type="project" value="UniProtKB-UniRule"/>
</dbReference>
<dbReference type="GO" id="GO:0004417">
    <property type="term" value="F:hydroxyethylthiazole kinase activity"/>
    <property type="evidence" value="ECO:0007669"/>
    <property type="project" value="UniProtKB-UniRule"/>
</dbReference>
<dbReference type="GO" id="GO:0000287">
    <property type="term" value="F:magnesium ion binding"/>
    <property type="evidence" value="ECO:0007669"/>
    <property type="project" value="UniProtKB-UniRule"/>
</dbReference>
<dbReference type="GO" id="GO:0009228">
    <property type="term" value="P:thiamine biosynthetic process"/>
    <property type="evidence" value="ECO:0007669"/>
    <property type="project" value="UniProtKB-KW"/>
</dbReference>
<dbReference type="GO" id="GO:0009229">
    <property type="term" value="P:thiamine diphosphate biosynthetic process"/>
    <property type="evidence" value="ECO:0007669"/>
    <property type="project" value="UniProtKB-UniRule"/>
</dbReference>
<dbReference type="CDD" id="cd01170">
    <property type="entry name" value="THZ_kinase"/>
    <property type="match status" value="1"/>
</dbReference>
<dbReference type="Gene3D" id="3.40.1190.20">
    <property type="match status" value="1"/>
</dbReference>
<dbReference type="HAMAP" id="MF_00228">
    <property type="entry name" value="Thz_kinase"/>
    <property type="match status" value="1"/>
</dbReference>
<dbReference type="InterPro" id="IPR000417">
    <property type="entry name" value="Hyethyz_kinase"/>
</dbReference>
<dbReference type="InterPro" id="IPR029056">
    <property type="entry name" value="Ribokinase-like"/>
</dbReference>
<dbReference type="NCBIfam" id="NF006830">
    <property type="entry name" value="PRK09355.1"/>
    <property type="match status" value="1"/>
</dbReference>
<dbReference type="NCBIfam" id="TIGR00694">
    <property type="entry name" value="thiM"/>
    <property type="match status" value="1"/>
</dbReference>
<dbReference type="Pfam" id="PF02110">
    <property type="entry name" value="HK"/>
    <property type="match status" value="1"/>
</dbReference>
<dbReference type="PIRSF" id="PIRSF000513">
    <property type="entry name" value="Thz_kinase"/>
    <property type="match status" value="1"/>
</dbReference>
<dbReference type="PRINTS" id="PR01099">
    <property type="entry name" value="HYETHTZKNASE"/>
</dbReference>
<dbReference type="SUPFAM" id="SSF53613">
    <property type="entry name" value="Ribokinase-like"/>
    <property type="match status" value="1"/>
</dbReference>
<organism>
    <name type="scientific">Archaeoglobus fulgidus (strain ATCC 49558 / DSM 4304 / JCM 9628 / NBRC 100126 / VC-16)</name>
    <dbReference type="NCBI Taxonomy" id="224325"/>
    <lineage>
        <taxon>Archaea</taxon>
        <taxon>Methanobacteriati</taxon>
        <taxon>Methanobacteriota</taxon>
        <taxon>Archaeoglobi</taxon>
        <taxon>Archaeoglobales</taxon>
        <taxon>Archaeoglobaceae</taxon>
        <taxon>Archaeoglobus</taxon>
    </lineage>
</organism>
<reference key="1">
    <citation type="journal article" date="1997" name="Nature">
        <title>The complete genome sequence of the hyperthermophilic, sulphate-reducing archaeon Archaeoglobus fulgidus.</title>
        <authorList>
            <person name="Klenk H.-P."/>
            <person name="Clayton R.A."/>
            <person name="Tomb J.-F."/>
            <person name="White O."/>
            <person name="Nelson K.E."/>
            <person name="Ketchum K.A."/>
            <person name="Dodson R.J."/>
            <person name="Gwinn M.L."/>
            <person name="Hickey E.K."/>
            <person name="Peterson J.D."/>
            <person name="Richardson D.L."/>
            <person name="Kerlavage A.R."/>
            <person name="Graham D.E."/>
            <person name="Kyrpides N.C."/>
            <person name="Fleischmann R.D."/>
            <person name="Quackenbush J."/>
            <person name="Lee N.H."/>
            <person name="Sutton G.G."/>
            <person name="Gill S.R."/>
            <person name="Kirkness E.F."/>
            <person name="Dougherty B.A."/>
            <person name="McKenney K."/>
            <person name="Adams M.D."/>
            <person name="Loftus B.J."/>
            <person name="Peterson S.N."/>
            <person name="Reich C.I."/>
            <person name="McNeil L.K."/>
            <person name="Badger J.H."/>
            <person name="Glodek A."/>
            <person name="Zhou L."/>
            <person name="Overbeek R."/>
            <person name="Gocayne J.D."/>
            <person name="Weidman J.F."/>
            <person name="McDonald L.A."/>
            <person name="Utterback T.R."/>
            <person name="Cotton M.D."/>
            <person name="Spriggs T."/>
            <person name="Artiach P."/>
            <person name="Kaine B.P."/>
            <person name="Sykes S.M."/>
            <person name="Sadow P.W."/>
            <person name="D'Andrea K.P."/>
            <person name="Bowman C."/>
            <person name="Fujii C."/>
            <person name="Garland S.A."/>
            <person name="Mason T.M."/>
            <person name="Olsen G.J."/>
            <person name="Fraser C.M."/>
            <person name="Smith H.O."/>
            <person name="Woese C.R."/>
            <person name="Venter J.C."/>
        </authorList>
    </citation>
    <scope>NUCLEOTIDE SEQUENCE [LARGE SCALE GENOMIC DNA]</scope>
    <source>
        <strain>ATCC 49558 / DSM 4304 / JCM 9628 / NBRC 100126 / VC-16</strain>
    </source>
</reference>
<protein>
    <recommendedName>
        <fullName evidence="1">Hydroxyethylthiazole kinase</fullName>
        <ecNumber evidence="1">2.7.1.50</ecNumber>
    </recommendedName>
    <alternativeName>
        <fullName evidence="1">4-methyl-5-beta-hydroxyethylthiazole kinase</fullName>
        <shortName evidence="1">TH kinase</shortName>
        <shortName evidence="1">Thz kinase</shortName>
    </alternativeName>
</protein>